<reference key="1">
    <citation type="journal article" date="2006" name="Proc. Natl. Acad. Sci. U.S.A.">
        <title>Identification of genes subject to positive selection in uropathogenic strains of Escherichia coli: a comparative genomics approach.</title>
        <authorList>
            <person name="Chen S.L."/>
            <person name="Hung C.-S."/>
            <person name="Xu J."/>
            <person name="Reigstad C.S."/>
            <person name="Magrini V."/>
            <person name="Sabo A."/>
            <person name="Blasiar D."/>
            <person name="Bieri T."/>
            <person name="Meyer R.R."/>
            <person name="Ozersky P."/>
            <person name="Armstrong J.R."/>
            <person name="Fulton R.S."/>
            <person name="Latreille J.P."/>
            <person name="Spieth J."/>
            <person name="Hooton T.M."/>
            <person name="Mardis E.R."/>
            <person name="Hultgren S.J."/>
            <person name="Gordon J.I."/>
        </authorList>
    </citation>
    <scope>NUCLEOTIDE SEQUENCE [LARGE SCALE GENOMIC DNA]</scope>
    <source>
        <strain>UTI89 / UPEC</strain>
    </source>
</reference>
<evidence type="ECO:0000255" key="1">
    <source>
        <dbReference type="HAMAP-Rule" id="MF_00416"/>
    </source>
</evidence>
<feature type="signal peptide" evidence="1">
    <location>
        <begin position="1"/>
        <end position="20"/>
    </location>
</feature>
<feature type="chain" id="PRO_1000050110" description="Flagellar P-ring protein">
    <location>
        <begin position="21"/>
        <end position="366"/>
    </location>
</feature>
<sequence length="366" mass="38269">MVIKFLSALILLLVTTAAQAERIRDLTSVQGVRQNSLIGYGLVVGLDGTGDQTTQTPFTTQTLNNMLSQLGITVPTGTNMQLKNVAAVMVTASLPPFGRQGQTIDVVVSSMGNAKSLRGGTLLMTPLKGVDSQVYALAQGNILVGGAGASAGGSSVQVNQLNGGRITNGAVIERELPSQFGVGNTLNLQLNDEDFSMAQQIADTINRVRGYGSATALDARTIQVRVPSGNSSQVRFLADIQNMQVNVTPQDAKVVINSRTGSVVMNREVTLDSCAVAQGNLSVTVNRQANVSQPDTPFGGGQTVVTPQTQIDLRQSGGSLQSVRSSASLNNVVRALNALGATPMDLMSILQSMQSAGCLRAKLEII</sequence>
<name>FLGI_ECOUT</name>
<protein>
    <recommendedName>
        <fullName evidence="1">Flagellar P-ring protein</fullName>
    </recommendedName>
    <alternativeName>
        <fullName evidence="1">Basal body P-ring protein</fullName>
    </alternativeName>
</protein>
<organism>
    <name type="scientific">Escherichia coli (strain UTI89 / UPEC)</name>
    <dbReference type="NCBI Taxonomy" id="364106"/>
    <lineage>
        <taxon>Bacteria</taxon>
        <taxon>Pseudomonadati</taxon>
        <taxon>Pseudomonadota</taxon>
        <taxon>Gammaproteobacteria</taxon>
        <taxon>Enterobacterales</taxon>
        <taxon>Enterobacteriaceae</taxon>
        <taxon>Escherichia</taxon>
    </lineage>
</organism>
<dbReference type="EMBL" id="CP000243">
    <property type="protein sequence ID" value="ABE06687.1"/>
    <property type="molecule type" value="Genomic_DNA"/>
</dbReference>
<dbReference type="SMR" id="Q1RD77"/>
<dbReference type="KEGG" id="eci:UTI89_C1205"/>
<dbReference type="HOGENOM" id="CLU_045235_1_0_6"/>
<dbReference type="Proteomes" id="UP000001952">
    <property type="component" value="Chromosome"/>
</dbReference>
<dbReference type="GO" id="GO:0009428">
    <property type="term" value="C:bacterial-type flagellum basal body, distal rod, P ring"/>
    <property type="evidence" value="ECO:0007669"/>
    <property type="project" value="InterPro"/>
</dbReference>
<dbReference type="GO" id="GO:0030288">
    <property type="term" value="C:outer membrane-bounded periplasmic space"/>
    <property type="evidence" value="ECO:0007669"/>
    <property type="project" value="InterPro"/>
</dbReference>
<dbReference type="GO" id="GO:0005198">
    <property type="term" value="F:structural molecule activity"/>
    <property type="evidence" value="ECO:0007669"/>
    <property type="project" value="InterPro"/>
</dbReference>
<dbReference type="GO" id="GO:0071973">
    <property type="term" value="P:bacterial-type flagellum-dependent cell motility"/>
    <property type="evidence" value="ECO:0007669"/>
    <property type="project" value="InterPro"/>
</dbReference>
<dbReference type="HAMAP" id="MF_00416">
    <property type="entry name" value="FlgI"/>
    <property type="match status" value="1"/>
</dbReference>
<dbReference type="InterPro" id="IPR001782">
    <property type="entry name" value="Flag_FlgI"/>
</dbReference>
<dbReference type="NCBIfam" id="NF003676">
    <property type="entry name" value="PRK05303.1"/>
    <property type="match status" value="1"/>
</dbReference>
<dbReference type="PANTHER" id="PTHR30381">
    <property type="entry name" value="FLAGELLAR P-RING PERIPLASMIC PROTEIN FLGI"/>
    <property type="match status" value="1"/>
</dbReference>
<dbReference type="PANTHER" id="PTHR30381:SF0">
    <property type="entry name" value="FLAGELLAR P-RING PROTEIN"/>
    <property type="match status" value="1"/>
</dbReference>
<dbReference type="Pfam" id="PF02119">
    <property type="entry name" value="FlgI"/>
    <property type="match status" value="1"/>
</dbReference>
<dbReference type="PRINTS" id="PR01010">
    <property type="entry name" value="FLGPRINGFLGI"/>
</dbReference>
<accession>Q1RD77</accession>
<comment type="function">
    <text evidence="1">Assembles around the rod to form the L-ring and probably protects the motor/basal body from shearing forces during rotation.</text>
</comment>
<comment type="subunit">
    <text evidence="1">The basal body constitutes a major portion of the flagellar organelle and consists of four rings (L,P,S, and M) mounted on a central rod.</text>
</comment>
<comment type="subcellular location">
    <subcellularLocation>
        <location evidence="1">Periplasm</location>
    </subcellularLocation>
    <subcellularLocation>
        <location evidence="1">Bacterial flagellum basal body</location>
    </subcellularLocation>
</comment>
<comment type="similarity">
    <text evidence="1">Belongs to the FlgI family.</text>
</comment>
<keyword id="KW-0975">Bacterial flagellum</keyword>
<keyword id="KW-0574">Periplasm</keyword>
<keyword id="KW-0732">Signal</keyword>
<gene>
    <name evidence="1" type="primary">flgI</name>
    <name type="ordered locus">UTI89_C1205</name>
</gene>
<proteinExistence type="inferred from homology"/>